<keyword id="KW-0067">ATP-binding</keyword>
<keyword id="KW-0460">Magnesium</keyword>
<keyword id="KW-0547">Nucleotide-binding</keyword>
<keyword id="KW-1185">Reference proteome</keyword>
<keyword id="KW-0808">Transferase</keyword>
<keyword id="KW-0819">tRNA processing</keyword>
<evidence type="ECO:0000255" key="1">
    <source>
        <dbReference type="HAMAP-Rule" id="MF_00185"/>
    </source>
</evidence>
<name>MIAA_BACSU</name>
<reference key="1">
    <citation type="journal article" date="1997" name="Nature">
        <title>The complete genome sequence of the Gram-positive bacterium Bacillus subtilis.</title>
        <authorList>
            <person name="Kunst F."/>
            <person name="Ogasawara N."/>
            <person name="Moszer I."/>
            <person name="Albertini A.M."/>
            <person name="Alloni G."/>
            <person name="Azevedo V."/>
            <person name="Bertero M.G."/>
            <person name="Bessieres P."/>
            <person name="Bolotin A."/>
            <person name="Borchert S."/>
            <person name="Borriss R."/>
            <person name="Boursier L."/>
            <person name="Brans A."/>
            <person name="Braun M."/>
            <person name="Brignell S.C."/>
            <person name="Bron S."/>
            <person name="Brouillet S."/>
            <person name="Bruschi C.V."/>
            <person name="Caldwell B."/>
            <person name="Capuano V."/>
            <person name="Carter N.M."/>
            <person name="Choi S.-K."/>
            <person name="Codani J.-J."/>
            <person name="Connerton I.F."/>
            <person name="Cummings N.J."/>
            <person name="Daniel R.A."/>
            <person name="Denizot F."/>
            <person name="Devine K.M."/>
            <person name="Duesterhoeft A."/>
            <person name="Ehrlich S.D."/>
            <person name="Emmerson P.T."/>
            <person name="Entian K.-D."/>
            <person name="Errington J."/>
            <person name="Fabret C."/>
            <person name="Ferrari E."/>
            <person name="Foulger D."/>
            <person name="Fritz C."/>
            <person name="Fujita M."/>
            <person name="Fujita Y."/>
            <person name="Fuma S."/>
            <person name="Galizzi A."/>
            <person name="Galleron N."/>
            <person name="Ghim S.-Y."/>
            <person name="Glaser P."/>
            <person name="Goffeau A."/>
            <person name="Golightly E.J."/>
            <person name="Grandi G."/>
            <person name="Guiseppi G."/>
            <person name="Guy B.J."/>
            <person name="Haga K."/>
            <person name="Haiech J."/>
            <person name="Harwood C.R."/>
            <person name="Henaut A."/>
            <person name="Hilbert H."/>
            <person name="Holsappel S."/>
            <person name="Hosono S."/>
            <person name="Hullo M.-F."/>
            <person name="Itaya M."/>
            <person name="Jones L.-M."/>
            <person name="Joris B."/>
            <person name="Karamata D."/>
            <person name="Kasahara Y."/>
            <person name="Klaerr-Blanchard M."/>
            <person name="Klein C."/>
            <person name="Kobayashi Y."/>
            <person name="Koetter P."/>
            <person name="Koningstein G."/>
            <person name="Krogh S."/>
            <person name="Kumano M."/>
            <person name="Kurita K."/>
            <person name="Lapidus A."/>
            <person name="Lardinois S."/>
            <person name="Lauber J."/>
            <person name="Lazarevic V."/>
            <person name="Lee S.-M."/>
            <person name="Levine A."/>
            <person name="Liu H."/>
            <person name="Masuda S."/>
            <person name="Mauel C."/>
            <person name="Medigue C."/>
            <person name="Medina N."/>
            <person name="Mellado R.P."/>
            <person name="Mizuno M."/>
            <person name="Moestl D."/>
            <person name="Nakai S."/>
            <person name="Noback M."/>
            <person name="Noone D."/>
            <person name="O'Reilly M."/>
            <person name="Ogawa K."/>
            <person name="Ogiwara A."/>
            <person name="Oudega B."/>
            <person name="Park S.-H."/>
            <person name="Parro V."/>
            <person name="Pohl T.M."/>
            <person name="Portetelle D."/>
            <person name="Porwollik S."/>
            <person name="Prescott A.M."/>
            <person name="Presecan E."/>
            <person name="Pujic P."/>
            <person name="Purnelle B."/>
            <person name="Rapoport G."/>
            <person name="Rey M."/>
            <person name="Reynolds S."/>
            <person name="Rieger M."/>
            <person name="Rivolta C."/>
            <person name="Rocha E."/>
            <person name="Roche B."/>
            <person name="Rose M."/>
            <person name="Sadaie Y."/>
            <person name="Sato T."/>
            <person name="Scanlan E."/>
            <person name="Schleich S."/>
            <person name="Schroeter R."/>
            <person name="Scoffone F."/>
            <person name="Sekiguchi J."/>
            <person name="Sekowska A."/>
            <person name="Seror S.J."/>
            <person name="Serror P."/>
            <person name="Shin B.-S."/>
            <person name="Soldo B."/>
            <person name="Sorokin A."/>
            <person name="Tacconi E."/>
            <person name="Takagi T."/>
            <person name="Takahashi H."/>
            <person name="Takemaru K."/>
            <person name="Takeuchi M."/>
            <person name="Tamakoshi A."/>
            <person name="Tanaka T."/>
            <person name="Terpstra P."/>
            <person name="Tognoni A."/>
            <person name="Tosato V."/>
            <person name="Uchiyama S."/>
            <person name="Vandenbol M."/>
            <person name="Vannier F."/>
            <person name="Vassarotti A."/>
            <person name="Viari A."/>
            <person name="Wambutt R."/>
            <person name="Wedler E."/>
            <person name="Wedler H."/>
            <person name="Weitzenegger T."/>
            <person name="Winters P."/>
            <person name="Wipat A."/>
            <person name="Yamamoto H."/>
            <person name="Yamane K."/>
            <person name="Yasumoto K."/>
            <person name="Yata K."/>
            <person name="Yoshida K."/>
            <person name="Yoshikawa H.-F."/>
            <person name="Zumstein E."/>
            <person name="Yoshikawa H."/>
            <person name="Danchin A."/>
        </authorList>
    </citation>
    <scope>NUCLEOTIDE SEQUENCE [LARGE SCALE GENOMIC DNA]</scope>
    <source>
        <strain>168</strain>
    </source>
</reference>
<reference key="2">
    <citation type="journal article" date="2009" name="Microbiology">
        <title>From a consortium sequence to a unified sequence: the Bacillus subtilis 168 reference genome a decade later.</title>
        <authorList>
            <person name="Barbe V."/>
            <person name="Cruveiller S."/>
            <person name="Kunst F."/>
            <person name="Lenoble P."/>
            <person name="Meurice G."/>
            <person name="Sekowska A."/>
            <person name="Vallenet D."/>
            <person name="Wang T."/>
            <person name="Moszer I."/>
            <person name="Medigue C."/>
            <person name="Danchin A."/>
        </authorList>
    </citation>
    <scope>SEQUENCE REVISION TO 101 AND 111</scope>
</reference>
<organism>
    <name type="scientific">Bacillus subtilis (strain 168)</name>
    <dbReference type="NCBI Taxonomy" id="224308"/>
    <lineage>
        <taxon>Bacteria</taxon>
        <taxon>Bacillati</taxon>
        <taxon>Bacillota</taxon>
        <taxon>Bacilli</taxon>
        <taxon>Bacillales</taxon>
        <taxon>Bacillaceae</taxon>
        <taxon>Bacillus</taxon>
    </lineage>
</organism>
<sequence>MNNTKQPVVILVGPTAVGKTNLSIQLAKSLNAEIISGDSMQIYKGMDIGTAKITEQEMEGVPHHLIDILDPQDSFSTADYQSLVRNKISEIANRGKLPMIVGGTGLYIQSVLYDYTFTEEANDPVFRESMQMAAEREGADFLHAKLAAADPEAAAAIHPNNTRRVIRALEILHTSGKTMSQHLKEQKRELLYNAVLIGLTMDRDTLYERINQRVDLMMQSGLLPEVKRLYDKNVRDCQSIQAIGYKELYAYFDGFVTLSDAVEQLKQNSRRYAKRQLTWFRNKMQVTWFDMTPPVDMELKKKEIFTHIAGKLEL</sequence>
<gene>
    <name evidence="1" type="primary">miaA</name>
    <name type="ordered locus">BSU17330</name>
</gene>
<feature type="chain" id="PRO_0000163876" description="tRNA dimethylallyltransferase">
    <location>
        <begin position="1"/>
        <end position="314"/>
    </location>
</feature>
<feature type="region of interest" description="Interaction with substrate tRNA" evidence="1">
    <location>
        <begin position="38"/>
        <end position="41"/>
    </location>
</feature>
<feature type="binding site" evidence="1">
    <location>
        <begin position="13"/>
        <end position="20"/>
    </location>
    <ligand>
        <name>ATP</name>
        <dbReference type="ChEBI" id="CHEBI:30616"/>
    </ligand>
</feature>
<feature type="binding site" evidence="1">
    <location>
        <begin position="15"/>
        <end position="20"/>
    </location>
    <ligand>
        <name>substrate</name>
    </ligand>
</feature>
<feature type="site" description="Interaction with substrate tRNA" evidence="1">
    <location>
        <position position="104"/>
    </location>
</feature>
<feature type="site" description="Interaction with substrate tRNA" evidence="1">
    <location>
        <position position="127"/>
    </location>
</feature>
<accession>O31795</accession>
<proteinExistence type="inferred from homology"/>
<dbReference type="EC" id="2.5.1.75" evidence="1"/>
<dbReference type="EMBL" id="AL009126">
    <property type="protein sequence ID" value="CAB13617.2"/>
    <property type="molecule type" value="Genomic_DNA"/>
</dbReference>
<dbReference type="PIR" id="G69657">
    <property type="entry name" value="G69657"/>
</dbReference>
<dbReference type="RefSeq" id="NP_389615.2">
    <property type="nucleotide sequence ID" value="NC_000964.3"/>
</dbReference>
<dbReference type="RefSeq" id="WP_003245569.1">
    <property type="nucleotide sequence ID" value="NZ_OZ025638.1"/>
</dbReference>
<dbReference type="SMR" id="O31795"/>
<dbReference type="FunCoup" id="O31795">
    <property type="interactions" value="737"/>
</dbReference>
<dbReference type="STRING" id="224308.BSU17330"/>
<dbReference type="PaxDb" id="224308-BSU17330"/>
<dbReference type="DNASU" id="940067"/>
<dbReference type="EnsemblBacteria" id="CAB13617">
    <property type="protein sequence ID" value="CAB13617"/>
    <property type="gene ID" value="BSU_17330"/>
</dbReference>
<dbReference type="GeneID" id="86873753"/>
<dbReference type="GeneID" id="940067"/>
<dbReference type="KEGG" id="bsu:BSU17330"/>
<dbReference type="PATRIC" id="fig|224308.179.peg.1879"/>
<dbReference type="eggNOG" id="COG0324">
    <property type="taxonomic scope" value="Bacteria"/>
</dbReference>
<dbReference type="InParanoid" id="O31795"/>
<dbReference type="OrthoDB" id="9776390at2"/>
<dbReference type="PhylomeDB" id="O31795"/>
<dbReference type="BioCyc" id="BSUB:BSU17330-MONOMER"/>
<dbReference type="Proteomes" id="UP000001570">
    <property type="component" value="Chromosome"/>
</dbReference>
<dbReference type="GO" id="GO:0005524">
    <property type="term" value="F:ATP binding"/>
    <property type="evidence" value="ECO:0007669"/>
    <property type="project" value="UniProtKB-UniRule"/>
</dbReference>
<dbReference type="GO" id="GO:0052381">
    <property type="term" value="F:tRNA dimethylallyltransferase activity"/>
    <property type="evidence" value="ECO:0000318"/>
    <property type="project" value="GO_Central"/>
</dbReference>
<dbReference type="GO" id="GO:0006400">
    <property type="term" value="P:tRNA modification"/>
    <property type="evidence" value="ECO:0000318"/>
    <property type="project" value="GO_Central"/>
</dbReference>
<dbReference type="FunFam" id="1.10.20.140:FF:000001">
    <property type="entry name" value="tRNA dimethylallyltransferase"/>
    <property type="match status" value="1"/>
</dbReference>
<dbReference type="Gene3D" id="1.10.20.140">
    <property type="match status" value="1"/>
</dbReference>
<dbReference type="Gene3D" id="3.40.50.300">
    <property type="entry name" value="P-loop containing nucleotide triphosphate hydrolases"/>
    <property type="match status" value="1"/>
</dbReference>
<dbReference type="HAMAP" id="MF_00185">
    <property type="entry name" value="IPP_trans"/>
    <property type="match status" value="1"/>
</dbReference>
<dbReference type="InterPro" id="IPR039657">
    <property type="entry name" value="Dimethylallyltransferase"/>
</dbReference>
<dbReference type="InterPro" id="IPR018022">
    <property type="entry name" value="IPT"/>
</dbReference>
<dbReference type="InterPro" id="IPR027417">
    <property type="entry name" value="P-loop_NTPase"/>
</dbReference>
<dbReference type="NCBIfam" id="TIGR00174">
    <property type="entry name" value="miaA"/>
    <property type="match status" value="1"/>
</dbReference>
<dbReference type="PANTHER" id="PTHR11088">
    <property type="entry name" value="TRNA DIMETHYLALLYLTRANSFERASE"/>
    <property type="match status" value="1"/>
</dbReference>
<dbReference type="PANTHER" id="PTHR11088:SF60">
    <property type="entry name" value="TRNA DIMETHYLALLYLTRANSFERASE"/>
    <property type="match status" value="1"/>
</dbReference>
<dbReference type="Pfam" id="PF01715">
    <property type="entry name" value="IPPT"/>
    <property type="match status" value="1"/>
</dbReference>
<dbReference type="SUPFAM" id="SSF52540">
    <property type="entry name" value="P-loop containing nucleoside triphosphate hydrolases"/>
    <property type="match status" value="2"/>
</dbReference>
<comment type="function">
    <text evidence="1">Catalyzes the transfer of a dimethylallyl group onto the adenine at position 37 in tRNAs that read codons beginning with uridine, leading to the formation of N6-(dimethylallyl)adenosine (i(6)A).</text>
</comment>
<comment type="catalytic activity">
    <reaction evidence="1">
        <text>adenosine(37) in tRNA + dimethylallyl diphosphate = N(6)-dimethylallyladenosine(37) in tRNA + diphosphate</text>
        <dbReference type="Rhea" id="RHEA:26482"/>
        <dbReference type="Rhea" id="RHEA-COMP:10162"/>
        <dbReference type="Rhea" id="RHEA-COMP:10375"/>
        <dbReference type="ChEBI" id="CHEBI:33019"/>
        <dbReference type="ChEBI" id="CHEBI:57623"/>
        <dbReference type="ChEBI" id="CHEBI:74411"/>
        <dbReference type="ChEBI" id="CHEBI:74415"/>
        <dbReference type="EC" id="2.5.1.75"/>
    </reaction>
</comment>
<comment type="cofactor">
    <cofactor evidence="1">
        <name>Mg(2+)</name>
        <dbReference type="ChEBI" id="CHEBI:18420"/>
    </cofactor>
</comment>
<comment type="subunit">
    <text evidence="1">Monomer.</text>
</comment>
<comment type="similarity">
    <text evidence="1">Belongs to the IPP transferase family.</text>
</comment>
<protein>
    <recommendedName>
        <fullName evidence="1">tRNA dimethylallyltransferase</fullName>
        <ecNumber evidence="1">2.5.1.75</ecNumber>
    </recommendedName>
    <alternativeName>
        <fullName evidence="1">Dimethylallyl diphosphate:tRNA dimethylallyltransferase</fullName>
        <shortName evidence="1">DMAPP:tRNA dimethylallyltransferase</shortName>
        <shortName evidence="1">DMATase</shortName>
    </alternativeName>
    <alternativeName>
        <fullName evidence="1">Isopentenyl-diphosphate:tRNA isopentenyltransferase</fullName>
        <shortName evidence="1">IPP transferase</shortName>
        <shortName evidence="1">IPPT</shortName>
        <shortName evidence="1">IPTase</shortName>
    </alternativeName>
</protein>